<organism>
    <name type="scientific">Salmonella heidelberg (strain SL476)</name>
    <dbReference type="NCBI Taxonomy" id="454169"/>
    <lineage>
        <taxon>Bacteria</taxon>
        <taxon>Pseudomonadati</taxon>
        <taxon>Pseudomonadota</taxon>
        <taxon>Gammaproteobacteria</taxon>
        <taxon>Enterobacterales</taxon>
        <taxon>Enterobacteriaceae</taxon>
        <taxon>Salmonella</taxon>
    </lineage>
</organism>
<accession>B4TFI4</accession>
<name>NAGZ_SALHS</name>
<keyword id="KW-0131">Cell cycle</keyword>
<keyword id="KW-0132">Cell division</keyword>
<keyword id="KW-0133">Cell shape</keyword>
<keyword id="KW-0961">Cell wall biogenesis/degradation</keyword>
<keyword id="KW-0963">Cytoplasm</keyword>
<keyword id="KW-0326">Glycosidase</keyword>
<keyword id="KW-0378">Hydrolase</keyword>
<keyword id="KW-0573">Peptidoglycan synthesis</keyword>
<feature type="chain" id="PRO_1000121071" description="Beta-hexosaminidase">
    <location>
        <begin position="1"/>
        <end position="341"/>
    </location>
</feature>
<feature type="region of interest" description="Disordered" evidence="2">
    <location>
        <begin position="170"/>
        <end position="189"/>
    </location>
</feature>
<feature type="compositionally biased region" description="Basic and acidic residues" evidence="2">
    <location>
        <begin position="174"/>
        <end position="189"/>
    </location>
</feature>
<feature type="active site" description="Proton donor/acceptor" evidence="1">
    <location>
        <position position="176"/>
    </location>
</feature>
<feature type="active site" description="Nucleophile" evidence="1">
    <location>
        <position position="248"/>
    </location>
</feature>
<feature type="binding site" evidence="1">
    <location>
        <position position="62"/>
    </location>
    <ligand>
        <name>substrate</name>
    </ligand>
</feature>
<feature type="binding site" evidence="1">
    <location>
        <position position="70"/>
    </location>
    <ligand>
        <name>substrate</name>
    </ligand>
</feature>
<feature type="binding site" evidence="1">
    <location>
        <position position="133"/>
    </location>
    <ligand>
        <name>substrate</name>
    </ligand>
</feature>
<feature type="binding site" evidence="1">
    <location>
        <begin position="163"/>
        <end position="164"/>
    </location>
    <ligand>
        <name>substrate</name>
    </ligand>
</feature>
<feature type="site" description="Important for catalytic activity" evidence="1">
    <location>
        <position position="174"/>
    </location>
</feature>
<sequence>MGPVMLNVEGCELDAEEREILAHPLVGGLILFTRNYHDPEQLRELVRQIRAASRNHLVVAVDQEGGRVQRFREGFTRLPAAQSFFALHGLEEGGRLAQEAGWLMASEMIAMDIDISFAPVLDVGHISAAIGERSYHADPAKALAMATRFIDGMHDAGMKTTGKHFPGHGAVTADSHKETPCDPRPETDIRGKDMSVFRTLISENKLDAIMPAHVIYRAIDPRPASGSPYWLKTVLRQELGFDGVIFSDDLSMEGAAIMGSYAERAQASLDAGCDMILVCNNRKGAVSVLDNLSPIKAERVTRLYHKGSFSRRELMDSARWKTASAQLNQLHERWQEEKAGH</sequence>
<dbReference type="EC" id="3.2.1.52" evidence="1"/>
<dbReference type="EMBL" id="CP001120">
    <property type="protein sequence ID" value="ACF68846.1"/>
    <property type="molecule type" value="Genomic_DNA"/>
</dbReference>
<dbReference type="RefSeq" id="WP_000529340.1">
    <property type="nucleotide sequence ID" value="NC_011083.1"/>
</dbReference>
<dbReference type="SMR" id="B4TFI4"/>
<dbReference type="CAZy" id="GH3">
    <property type="family name" value="Glycoside Hydrolase Family 3"/>
</dbReference>
<dbReference type="KEGG" id="seh:SeHA_C1323"/>
<dbReference type="HOGENOM" id="CLU_008392_0_0_6"/>
<dbReference type="UniPathway" id="UPA00544"/>
<dbReference type="Proteomes" id="UP000001866">
    <property type="component" value="Chromosome"/>
</dbReference>
<dbReference type="GO" id="GO:0005737">
    <property type="term" value="C:cytoplasm"/>
    <property type="evidence" value="ECO:0007669"/>
    <property type="project" value="UniProtKB-SubCell"/>
</dbReference>
<dbReference type="GO" id="GO:0004563">
    <property type="term" value="F:beta-N-acetylhexosaminidase activity"/>
    <property type="evidence" value="ECO:0007669"/>
    <property type="project" value="UniProtKB-UniRule"/>
</dbReference>
<dbReference type="GO" id="GO:0005975">
    <property type="term" value="P:carbohydrate metabolic process"/>
    <property type="evidence" value="ECO:0007669"/>
    <property type="project" value="InterPro"/>
</dbReference>
<dbReference type="GO" id="GO:0051301">
    <property type="term" value="P:cell division"/>
    <property type="evidence" value="ECO:0007669"/>
    <property type="project" value="UniProtKB-KW"/>
</dbReference>
<dbReference type="GO" id="GO:0071555">
    <property type="term" value="P:cell wall organization"/>
    <property type="evidence" value="ECO:0007669"/>
    <property type="project" value="UniProtKB-KW"/>
</dbReference>
<dbReference type="GO" id="GO:0009252">
    <property type="term" value="P:peptidoglycan biosynthetic process"/>
    <property type="evidence" value="ECO:0007669"/>
    <property type="project" value="UniProtKB-KW"/>
</dbReference>
<dbReference type="GO" id="GO:0009254">
    <property type="term" value="P:peptidoglycan turnover"/>
    <property type="evidence" value="ECO:0007669"/>
    <property type="project" value="UniProtKB-UniRule"/>
</dbReference>
<dbReference type="GO" id="GO:0008360">
    <property type="term" value="P:regulation of cell shape"/>
    <property type="evidence" value="ECO:0007669"/>
    <property type="project" value="UniProtKB-KW"/>
</dbReference>
<dbReference type="FunFam" id="3.20.20.300:FF:000001">
    <property type="entry name" value="Beta-hexosaminidase"/>
    <property type="match status" value="1"/>
</dbReference>
<dbReference type="Gene3D" id="3.20.20.300">
    <property type="entry name" value="Glycoside hydrolase, family 3, N-terminal domain"/>
    <property type="match status" value="1"/>
</dbReference>
<dbReference type="HAMAP" id="MF_00364">
    <property type="entry name" value="NagZ"/>
    <property type="match status" value="1"/>
</dbReference>
<dbReference type="InterPro" id="IPR022956">
    <property type="entry name" value="Beta_hexosaminidase_bac"/>
</dbReference>
<dbReference type="InterPro" id="IPR019800">
    <property type="entry name" value="Glyco_hydro_3_AS"/>
</dbReference>
<dbReference type="InterPro" id="IPR001764">
    <property type="entry name" value="Glyco_hydro_3_N"/>
</dbReference>
<dbReference type="InterPro" id="IPR036962">
    <property type="entry name" value="Glyco_hydro_3_N_sf"/>
</dbReference>
<dbReference type="InterPro" id="IPR017853">
    <property type="entry name" value="Glycoside_hydrolase_SF"/>
</dbReference>
<dbReference type="InterPro" id="IPR050226">
    <property type="entry name" value="NagZ_Beta-hexosaminidase"/>
</dbReference>
<dbReference type="NCBIfam" id="NF003740">
    <property type="entry name" value="PRK05337.1"/>
    <property type="match status" value="1"/>
</dbReference>
<dbReference type="PANTHER" id="PTHR30480:SF13">
    <property type="entry name" value="BETA-HEXOSAMINIDASE"/>
    <property type="match status" value="1"/>
</dbReference>
<dbReference type="PANTHER" id="PTHR30480">
    <property type="entry name" value="BETA-HEXOSAMINIDASE-RELATED"/>
    <property type="match status" value="1"/>
</dbReference>
<dbReference type="Pfam" id="PF00933">
    <property type="entry name" value="Glyco_hydro_3"/>
    <property type="match status" value="1"/>
</dbReference>
<dbReference type="SUPFAM" id="SSF51445">
    <property type="entry name" value="(Trans)glycosidases"/>
    <property type="match status" value="1"/>
</dbReference>
<dbReference type="PROSITE" id="PS00775">
    <property type="entry name" value="GLYCOSYL_HYDROL_F3"/>
    <property type="match status" value="1"/>
</dbReference>
<comment type="function">
    <text evidence="1">Plays a role in peptidoglycan recycling by cleaving the terminal beta-1,4-linked N-acetylglucosamine (GlcNAc) from peptide-linked peptidoglycan fragments, giving rise to free GlcNAc, anhydro-N-acetylmuramic acid and anhydro-N-acetylmuramic acid-linked peptides.</text>
</comment>
<comment type="catalytic activity">
    <reaction evidence="1">
        <text>Hydrolysis of terminal non-reducing N-acetyl-D-hexosamine residues in N-acetyl-beta-D-hexosaminides.</text>
        <dbReference type="EC" id="3.2.1.52"/>
    </reaction>
</comment>
<comment type="pathway">
    <text evidence="1">Cell wall biogenesis; peptidoglycan recycling.</text>
</comment>
<comment type="subcellular location">
    <subcellularLocation>
        <location evidence="1">Cytoplasm</location>
    </subcellularLocation>
</comment>
<comment type="similarity">
    <text evidence="1">Belongs to the glycosyl hydrolase 3 family. NagZ subfamily.</text>
</comment>
<gene>
    <name evidence="1" type="primary">nagZ</name>
    <name type="ordered locus">SeHA_C1323</name>
</gene>
<protein>
    <recommendedName>
        <fullName evidence="1">Beta-hexosaminidase</fullName>
        <ecNumber evidence="1">3.2.1.52</ecNumber>
    </recommendedName>
    <alternativeName>
        <fullName evidence="1">Beta-N-acetylhexosaminidase</fullName>
    </alternativeName>
    <alternativeName>
        <fullName evidence="1">N-acetyl-beta-glucosaminidase</fullName>
    </alternativeName>
</protein>
<evidence type="ECO:0000255" key="1">
    <source>
        <dbReference type="HAMAP-Rule" id="MF_00364"/>
    </source>
</evidence>
<evidence type="ECO:0000256" key="2">
    <source>
        <dbReference type="SAM" id="MobiDB-lite"/>
    </source>
</evidence>
<proteinExistence type="inferred from homology"/>
<reference key="1">
    <citation type="journal article" date="2011" name="J. Bacteriol.">
        <title>Comparative genomics of 28 Salmonella enterica isolates: evidence for CRISPR-mediated adaptive sublineage evolution.</title>
        <authorList>
            <person name="Fricke W.F."/>
            <person name="Mammel M.K."/>
            <person name="McDermott P.F."/>
            <person name="Tartera C."/>
            <person name="White D.G."/>
            <person name="Leclerc J.E."/>
            <person name="Ravel J."/>
            <person name="Cebula T.A."/>
        </authorList>
    </citation>
    <scope>NUCLEOTIDE SEQUENCE [LARGE SCALE GENOMIC DNA]</scope>
    <source>
        <strain>SL476</strain>
    </source>
</reference>